<comment type="function">
    <text evidence="1">Catalyzes the anti-1,4-elimination of the C-3 phosphate and the C-6 proR hydrogen from 5-enolpyruvylshikimate-3-phosphate (EPSP) to yield chorismate, which is the branch point compound that serves as the starting substrate for the three terminal pathways of aromatic amino acid biosynthesis. This reaction introduces a second double bond into the aromatic ring system.</text>
</comment>
<comment type="catalytic activity">
    <reaction evidence="1">
        <text>5-O-(1-carboxyvinyl)-3-phosphoshikimate = chorismate + phosphate</text>
        <dbReference type="Rhea" id="RHEA:21020"/>
        <dbReference type="ChEBI" id="CHEBI:29748"/>
        <dbReference type="ChEBI" id="CHEBI:43474"/>
        <dbReference type="ChEBI" id="CHEBI:57701"/>
        <dbReference type="EC" id="4.2.3.5"/>
    </reaction>
</comment>
<comment type="cofactor">
    <cofactor evidence="1">
        <name>FMNH2</name>
        <dbReference type="ChEBI" id="CHEBI:57618"/>
    </cofactor>
    <text evidence="1">Reduced FMN (FMNH(2)).</text>
</comment>
<comment type="pathway">
    <text evidence="1">Metabolic intermediate biosynthesis; chorismate biosynthesis; chorismate from D-erythrose 4-phosphate and phosphoenolpyruvate: step 7/7.</text>
</comment>
<comment type="subunit">
    <text evidence="1">Homotetramer.</text>
</comment>
<comment type="similarity">
    <text evidence="1">Belongs to the chorismate synthase family.</text>
</comment>
<keyword id="KW-0028">Amino-acid biosynthesis</keyword>
<keyword id="KW-0057">Aromatic amino acid biosynthesis</keyword>
<keyword id="KW-0274">FAD</keyword>
<keyword id="KW-0285">Flavoprotein</keyword>
<keyword id="KW-0288">FMN</keyword>
<keyword id="KW-0456">Lyase</keyword>
<keyword id="KW-0521">NADP</keyword>
<gene>
    <name evidence="1" type="primary">aroC</name>
    <name type="ordered locus">BWG_2103</name>
</gene>
<proteinExistence type="inferred from homology"/>
<name>AROC_ECOBW</name>
<protein>
    <recommendedName>
        <fullName evidence="1">Chorismate synthase</fullName>
        <shortName evidence="1">CS</shortName>
        <ecNumber evidence="1">4.2.3.5</ecNumber>
    </recommendedName>
    <alternativeName>
        <fullName evidence="1">5-enolpyruvylshikimate-3-phosphate phospholyase</fullName>
    </alternativeName>
</protein>
<accession>C4ZVM2</accession>
<sequence length="361" mass="39137">MAGNTIGQLFRVTTFGESHGLALGCIVDGVPPGIPLTEADLQHDLDRRRPGTSRYTTQRREPDQVKILSGVFEGVTTGTSIGLLIENTDQRSQDYSAIKDVFRPGHADYTYEQKYGLRDYRGGGRSSARETAMRVAAGAIAKKYLAEKFGIEIRGCLTQMGDIPLDIKDWSQVEQNPFFCPDPDKIDALDELMRALKKEGDSIGAKVTVVASGVPAGLGEPVFDRLDADIAHALMSINAVKGVEIGDGFDVVALRGSQNRDEITKDGFQSNHAGGILGGISSGQQIIAHMALKPTSSITVPGRTINRFGEEVEMITKGRHDPCVGIRAVPIAEAMLAIVLMDHLLRQRAQNADVKTDIPRW</sequence>
<feature type="chain" id="PRO_1000204947" description="Chorismate synthase">
    <location>
        <begin position="1"/>
        <end position="361"/>
    </location>
</feature>
<feature type="binding site" evidence="1">
    <location>
        <position position="48"/>
    </location>
    <ligand>
        <name>NADP(+)</name>
        <dbReference type="ChEBI" id="CHEBI:58349"/>
    </ligand>
</feature>
<feature type="binding site" evidence="1">
    <location>
        <position position="54"/>
    </location>
    <ligand>
        <name>NADP(+)</name>
        <dbReference type="ChEBI" id="CHEBI:58349"/>
    </ligand>
</feature>
<feature type="binding site" evidence="1">
    <location>
        <begin position="125"/>
        <end position="127"/>
    </location>
    <ligand>
        <name>FMN</name>
        <dbReference type="ChEBI" id="CHEBI:58210"/>
    </ligand>
</feature>
<feature type="binding site" evidence="1">
    <location>
        <begin position="238"/>
        <end position="239"/>
    </location>
    <ligand>
        <name>FMN</name>
        <dbReference type="ChEBI" id="CHEBI:58210"/>
    </ligand>
</feature>
<feature type="binding site" evidence="1">
    <location>
        <position position="278"/>
    </location>
    <ligand>
        <name>FMN</name>
        <dbReference type="ChEBI" id="CHEBI:58210"/>
    </ligand>
</feature>
<feature type="binding site" evidence="1">
    <location>
        <begin position="293"/>
        <end position="297"/>
    </location>
    <ligand>
        <name>FMN</name>
        <dbReference type="ChEBI" id="CHEBI:58210"/>
    </ligand>
</feature>
<feature type="binding site" evidence="1">
    <location>
        <position position="319"/>
    </location>
    <ligand>
        <name>FMN</name>
        <dbReference type="ChEBI" id="CHEBI:58210"/>
    </ligand>
</feature>
<organism>
    <name type="scientific">Escherichia coli (strain K12 / MC4100 / BW2952)</name>
    <dbReference type="NCBI Taxonomy" id="595496"/>
    <lineage>
        <taxon>Bacteria</taxon>
        <taxon>Pseudomonadati</taxon>
        <taxon>Pseudomonadota</taxon>
        <taxon>Gammaproteobacteria</taxon>
        <taxon>Enterobacterales</taxon>
        <taxon>Enterobacteriaceae</taxon>
        <taxon>Escherichia</taxon>
    </lineage>
</organism>
<dbReference type="EC" id="4.2.3.5" evidence="1"/>
<dbReference type="EMBL" id="CP001396">
    <property type="protein sequence ID" value="ACR62145.1"/>
    <property type="molecule type" value="Genomic_DNA"/>
</dbReference>
<dbReference type="RefSeq" id="WP_001333535.1">
    <property type="nucleotide sequence ID" value="NC_012759.1"/>
</dbReference>
<dbReference type="SMR" id="C4ZVM2"/>
<dbReference type="GeneID" id="75172457"/>
<dbReference type="KEGG" id="ebw:BWG_2103"/>
<dbReference type="HOGENOM" id="CLU_034547_0_2_6"/>
<dbReference type="UniPathway" id="UPA00053">
    <property type="reaction ID" value="UER00090"/>
</dbReference>
<dbReference type="GO" id="GO:0005829">
    <property type="term" value="C:cytosol"/>
    <property type="evidence" value="ECO:0007669"/>
    <property type="project" value="TreeGrafter"/>
</dbReference>
<dbReference type="GO" id="GO:0004107">
    <property type="term" value="F:chorismate synthase activity"/>
    <property type="evidence" value="ECO:0007669"/>
    <property type="project" value="UniProtKB-UniRule"/>
</dbReference>
<dbReference type="GO" id="GO:0010181">
    <property type="term" value="F:FMN binding"/>
    <property type="evidence" value="ECO:0007669"/>
    <property type="project" value="TreeGrafter"/>
</dbReference>
<dbReference type="GO" id="GO:0008652">
    <property type="term" value="P:amino acid biosynthetic process"/>
    <property type="evidence" value="ECO:0007669"/>
    <property type="project" value="UniProtKB-KW"/>
</dbReference>
<dbReference type="GO" id="GO:0009073">
    <property type="term" value="P:aromatic amino acid family biosynthetic process"/>
    <property type="evidence" value="ECO:0007669"/>
    <property type="project" value="UniProtKB-KW"/>
</dbReference>
<dbReference type="GO" id="GO:0009423">
    <property type="term" value="P:chorismate biosynthetic process"/>
    <property type="evidence" value="ECO:0007669"/>
    <property type="project" value="UniProtKB-UniRule"/>
</dbReference>
<dbReference type="CDD" id="cd07304">
    <property type="entry name" value="Chorismate_synthase"/>
    <property type="match status" value="1"/>
</dbReference>
<dbReference type="FunFam" id="3.60.150.10:FF:000001">
    <property type="entry name" value="Chorismate synthase"/>
    <property type="match status" value="1"/>
</dbReference>
<dbReference type="Gene3D" id="3.60.150.10">
    <property type="entry name" value="Chorismate synthase AroC"/>
    <property type="match status" value="1"/>
</dbReference>
<dbReference type="HAMAP" id="MF_00300">
    <property type="entry name" value="Chorismate_synth"/>
    <property type="match status" value="1"/>
</dbReference>
<dbReference type="InterPro" id="IPR000453">
    <property type="entry name" value="Chorismate_synth"/>
</dbReference>
<dbReference type="InterPro" id="IPR035904">
    <property type="entry name" value="Chorismate_synth_AroC_sf"/>
</dbReference>
<dbReference type="InterPro" id="IPR020541">
    <property type="entry name" value="Chorismate_synthase_CS"/>
</dbReference>
<dbReference type="NCBIfam" id="TIGR00033">
    <property type="entry name" value="aroC"/>
    <property type="match status" value="1"/>
</dbReference>
<dbReference type="NCBIfam" id="NF003793">
    <property type="entry name" value="PRK05382.1"/>
    <property type="match status" value="1"/>
</dbReference>
<dbReference type="PANTHER" id="PTHR21085">
    <property type="entry name" value="CHORISMATE SYNTHASE"/>
    <property type="match status" value="1"/>
</dbReference>
<dbReference type="PANTHER" id="PTHR21085:SF0">
    <property type="entry name" value="CHORISMATE SYNTHASE"/>
    <property type="match status" value="1"/>
</dbReference>
<dbReference type="Pfam" id="PF01264">
    <property type="entry name" value="Chorismate_synt"/>
    <property type="match status" value="1"/>
</dbReference>
<dbReference type="PIRSF" id="PIRSF001456">
    <property type="entry name" value="Chorismate_synth"/>
    <property type="match status" value="1"/>
</dbReference>
<dbReference type="SUPFAM" id="SSF103263">
    <property type="entry name" value="Chorismate synthase, AroC"/>
    <property type="match status" value="1"/>
</dbReference>
<dbReference type="PROSITE" id="PS00787">
    <property type="entry name" value="CHORISMATE_SYNTHASE_1"/>
    <property type="match status" value="1"/>
</dbReference>
<dbReference type="PROSITE" id="PS00788">
    <property type="entry name" value="CHORISMATE_SYNTHASE_2"/>
    <property type="match status" value="1"/>
</dbReference>
<dbReference type="PROSITE" id="PS00789">
    <property type="entry name" value="CHORISMATE_SYNTHASE_3"/>
    <property type="match status" value="1"/>
</dbReference>
<evidence type="ECO:0000255" key="1">
    <source>
        <dbReference type="HAMAP-Rule" id="MF_00300"/>
    </source>
</evidence>
<reference key="1">
    <citation type="journal article" date="2009" name="J. Bacteriol.">
        <title>Genomic sequencing reveals regulatory mutations and recombinational events in the widely used MC4100 lineage of Escherichia coli K-12.</title>
        <authorList>
            <person name="Ferenci T."/>
            <person name="Zhou Z."/>
            <person name="Betteridge T."/>
            <person name="Ren Y."/>
            <person name="Liu Y."/>
            <person name="Feng L."/>
            <person name="Reeves P.R."/>
            <person name="Wang L."/>
        </authorList>
    </citation>
    <scope>NUCLEOTIDE SEQUENCE [LARGE SCALE GENOMIC DNA]</scope>
    <source>
        <strain>K12 / MC4100 / BW2952</strain>
    </source>
</reference>